<evidence type="ECO:0000255" key="1">
    <source>
        <dbReference type="HAMAP-Rule" id="MF_00537"/>
    </source>
</evidence>
<evidence type="ECO:0000256" key="2">
    <source>
        <dbReference type="SAM" id="MobiDB-lite"/>
    </source>
</evidence>
<evidence type="ECO:0000305" key="3"/>
<keyword id="KW-0687">Ribonucleoprotein</keyword>
<keyword id="KW-0689">Ribosomal protein</keyword>
<keyword id="KW-0694">RNA-binding</keyword>
<keyword id="KW-0699">rRNA-binding</keyword>
<sequence length="101" mass="11500">MAKVSAIQKNKSRQKKSQRLHNKRSALKSKIYDKSLSLEQRFSLIIALAQLPRNSSSTRIRNRCELTGRPRGVTRKFGISRNKLRELIGRGLVPGVVKASW</sequence>
<organism>
    <name type="scientific">Rickettsia typhi (strain ATCC VR-144 / Wilmington)</name>
    <dbReference type="NCBI Taxonomy" id="257363"/>
    <lineage>
        <taxon>Bacteria</taxon>
        <taxon>Pseudomonadati</taxon>
        <taxon>Pseudomonadota</taxon>
        <taxon>Alphaproteobacteria</taxon>
        <taxon>Rickettsiales</taxon>
        <taxon>Rickettsiaceae</taxon>
        <taxon>Rickettsieae</taxon>
        <taxon>Rickettsia</taxon>
        <taxon>typhus group</taxon>
    </lineage>
</organism>
<feature type="chain" id="PRO_0000278003" description="Small ribosomal subunit protein uS14">
    <location>
        <begin position="1"/>
        <end position="101"/>
    </location>
</feature>
<feature type="region of interest" description="Disordered" evidence="2">
    <location>
        <begin position="1"/>
        <end position="25"/>
    </location>
</feature>
<feature type="compositionally biased region" description="Basic residues" evidence="2">
    <location>
        <begin position="10"/>
        <end position="25"/>
    </location>
</feature>
<dbReference type="EMBL" id="AE017197">
    <property type="protein sequence ID" value="AAU04101.1"/>
    <property type="molecule type" value="Genomic_DNA"/>
</dbReference>
<dbReference type="RefSeq" id="WP_011191080.1">
    <property type="nucleotide sequence ID" value="NC_006142.1"/>
</dbReference>
<dbReference type="SMR" id="Q68W91"/>
<dbReference type="KEGG" id="rty:RT0638"/>
<dbReference type="eggNOG" id="COG0199">
    <property type="taxonomic scope" value="Bacteria"/>
</dbReference>
<dbReference type="HOGENOM" id="CLU_139869_0_1_5"/>
<dbReference type="OrthoDB" id="9810484at2"/>
<dbReference type="Proteomes" id="UP000000604">
    <property type="component" value="Chromosome"/>
</dbReference>
<dbReference type="GO" id="GO:0005737">
    <property type="term" value="C:cytoplasm"/>
    <property type="evidence" value="ECO:0007669"/>
    <property type="project" value="UniProtKB-ARBA"/>
</dbReference>
<dbReference type="GO" id="GO:0015935">
    <property type="term" value="C:small ribosomal subunit"/>
    <property type="evidence" value="ECO:0007669"/>
    <property type="project" value="TreeGrafter"/>
</dbReference>
<dbReference type="GO" id="GO:0019843">
    <property type="term" value="F:rRNA binding"/>
    <property type="evidence" value="ECO:0007669"/>
    <property type="project" value="UniProtKB-UniRule"/>
</dbReference>
<dbReference type="GO" id="GO:0003735">
    <property type="term" value="F:structural constituent of ribosome"/>
    <property type="evidence" value="ECO:0007669"/>
    <property type="project" value="InterPro"/>
</dbReference>
<dbReference type="GO" id="GO:0006412">
    <property type="term" value="P:translation"/>
    <property type="evidence" value="ECO:0007669"/>
    <property type="project" value="UniProtKB-UniRule"/>
</dbReference>
<dbReference type="FunFam" id="1.10.287.1480:FF:000001">
    <property type="entry name" value="30S ribosomal protein S14"/>
    <property type="match status" value="1"/>
</dbReference>
<dbReference type="Gene3D" id="1.10.287.1480">
    <property type="match status" value="1"/>
</dbReference>
<dbReference type="HAMAP" id="MF_00537">
    <property type="entry name" value="Ribosomal_uS14_1"/>
    <property type="match status" value="1"/>
</dbReference>
<dbReference type="InterPro" id="IPR001209">
    <property type="entry name" value="Ribosomal_uS14"/>
</dbReference>
<dbReference type="InterPro" id="IPR023036">
    <property type="entry name" value="Ribosomal_uS14_bac/plastid"/>
</dbReference>
<dbReference type="InterPro" id="IPR018271">
    <property type="entry name" value="Ribosomal_uS14_CS"/>
</dbReference>
<dbReference type="NCBIfam" id="NF006477">
    <property type="entry name" value="PRK08881.1"/>
    <property type="match status" value="1"/>
</dbReference>
<dbReference type="PANTHER" id="PTHR19836">
    <property type="entry name" value="30S RIBOSOMAL PROTEIN S14"/>
    <property type="match status" value="1"/>
</dbReference>
<dbReference type="PANTHER" id="PTHR19836:SF19">
    <property type="entry name" value="SMALL RIBOSOMAL SUBUNIT PROTEIN US14M"/>
    <property type="match status" value="1"/>
</dbReference>
<dbReference type="Pfam" id="PF00253">
    <property type="entry name" value="Ribosomal_S14"/>
    <property type="match status" value="1"/>
</dbReference>
<dbReference type="SUPFAM" id="SSF57716">
    <property type="entry name" value="Glucocorticoid receptor-like (DNA-binding domain)"/>
    <property type="match status" value="1"/>
</dbReference>
<dbReference type="PROSITE" id="PS00527">
    <property type="entry name" value="RIBOSOMAL_S14"/>
    <property type="match status" value="1"/>
</dbReference>
<gene>
    <name evidence="1" type="primary">rpsN</name>
    <name type="ordered locus">RT0638</name>
</gene>
<comment type="function">
    <text evidence="1">Binds 16S rRNA, required for the assembly of 30S particles and may also be responsible for determining the conformation of the 16S rRNA at the A site.</text>
</comment>
<comment type="subunit">
    <text evidence="1">Part of the 30S ribosomal subunit. Contacts proteins S3 and S10.</text>
</comment>
<comment type="similarity">
    <text evidence="1">Belongs to the universal ribosomal protein uS14 family.</text>
</comment>
<name>RS14_RICTY</name>
<accession>Q68W91</accession>
<proteinExistence type="inferred from homology"/>
<protein>
    <recommendedName>
        <fullName evidence="1">Small ribosomal subunit protein uS14</fullName>
    </recommendedName>
    <alternativeName>
        <fullName evidence="3">30S ribosomal protein S14</fullName>
    </alternativeName>
</protein>
<reference key="1">
    <citation type="journal article" date="2004" name="J. Bacteriol.">
        <title>Complete genome sequence of Rickettsia typhi and comparison with sequences of other Rickettsiae.</title>
        <authorList>
            <person name="McLeod M.P."/>
            <person name="Qin X."/>
            <person name="Karpathy S.E."/>
            <person name="Gioia J."/>
            <person name="Highlander S.K."/>
            <person name="Fox G.E."/>
            <person name="McNeill T.Z."/>
            <person name="Jiang H."/>
            <person name="Muzny D."/>
            <person name="Jacob L.S."/>
            <person name="Hawes A.C."/>
            <person name="Sodergren E."/>
            <person name="Gill R."/>
            <person name="Hume J."/>
            <person name="Morgan M."/>
            <person name="Fan G."/>
            <person name="Amin A.G."/>
            <person name="Gibbs R.A."/>
            <person name="Hong C."/>
            <person name="Yu X.-J."/>
            <person name="Walker D.H."/>
            <person name="Weinstock G.M."/>
        </authorList>
    </citation>
    <scope>NUCLEOTIDE SEQUENCE [LARGE SCALE GENOMIC DNA]</scope>
    <source>
        <strain>ATCC VR-144 / Wilmington</strain>
    </source>
</reference>